<sequence>MLTSKEIRESFKTFFASKGHKIVPSAPMVIKGDPTLMFTNAGMNQFKDIILGNTEAKYTRVADSQKCLRVSGKHNDLEEVGHDTYHHTMFEMLGNWSFGDYFKKEAIEWAWEYLVTVLGLDPQRLYATVFEGNPEEGLDRDNEAASYWAQFLPEERIINGNKHDNFWEMGDTGPCGPCSEIHIDLRSDEERAQINGLELINKSHPQVIEIWNLVFMQYNRKADASLTPLPHKVIDTGMGFERLCMALQGKTSNYDTDVFQPLIRTLATMTGIGYGEDSTSDIAMRVVADHIRTIAFAITDGQLPSNAKAGYVIRRILRRAVRYGYTFLHCREAFMYRLLPTLIDTMGDAYPELQAQRELISRVIKEEEESFLRTLETGIRLLEKKIADNKATGSTVLDGVAAFELYDTFGFPLDLTALILSENGMTVDESGFDTEMQKQKERARNAAAVEAGDWVVLREGESKFSGYDFTETETEILRYRQVKQKNKEYFQVVLSDTPFYAEMGGQVGDSGQLIDESGVAYDIFDTKRENNLSVHLMKKLPESTTDTFVARINQDKRRQAEANHTATHLLHEALREVLGTHVEQKGSFVSPEVLRFDFSHFGKMSPEEIRKVEELVSERIRADFQREEFRDVPIAEAQAMGAMALFGEKYGEEVRVLKYGSSVELCGGTHIPSTGMIGAFRIVTESSIASGVRRIEAVTGIGAERFIYEKEDILLAVKELFNNNPNLIKSIKKMLEEDASLKKQIADMKHERMLKFKKSLLEQDVRRRGIRLFLFQEIMEAETAKDIAFQIAGELQESFVLIAGTTEGGEKCALTVMLSKDLTEGGMDAAKLVRSAAKHIQGGGGGQPHFATAGGKNPKGLPAAIQQILTEAELTD</sequence>
<protein>
    <recommendedName>
        <fullName evidence="1">Alanine--tRNA ligase</fullName>
        <ecNumber evidence="1">6.1.1.7</ecNumber>
    </recommendedName>
    <alternativeName>
        <fullName evidence="1">Alanyl-tRNA synthetase</fullName>
        <shortName evidence="1">AlaRS</shortName>
    </alternativeName>
</protein>
<comment type="function">
    <text evidence="1">Catalyzes the attachment of alanine to tRNA(Ala) in a two-step reaction: alanine is first activated by ATP to form Ala-AMP and then transferred to the acceptor end of tRNA(Ala). Also edits incorrectly charged Ser-tRNA(Ala) and Gly-tRNA(Ala) via its editing domain.</text>
</comment>
<comment type="catalytic activity">
    <reaction evidence="1">
        <text>tRNA(Ala) + L-alanine + ATP = L-alanyl-tRNA(Ala) + AMP + diphosphate</text>
        <dbReference type="Rhea" id="RHEA:12540"/>
        <dbReference type="Rhea" id="RHEA-COMP:9657"/>
        <dbReference type="Rhea" id="RHEA-COMP:9923"/>
        <dbReference type="ChEBI" id="CHEBI:30616"/>
        <dbReference type="ChEBI" id="CHEBI:33019"/>
        <dbReference type="ChEBI" id="CHEBI:57972"/>
        <dbReference type="ChEBI" id="CHEBI:78442"/>
        <dbReference type="ChEBI" id="CHEBI:78497"/>
        <dbReference type="ChEBI" id="CHEBI:456215"/>
        <dbReference type="EC" id="6.1.1.7"/>
    </reaction>
</comment>
<comment type="cofactor">
    <cofactor evidence="1">
        <name>Zn(2+)</name>
        <dbReference type="ChEBI" id="CHEBI:29105"/>
    </cofactor>
    <text evidence="1">Binds 1 zinc ion per subunit.</text>
</comment>
<comment type="subcellular location">
    <subcellularLocation>
        <location evidence="1">Cytoplasm</location>
    </subcellularLocation>
</comment>
<comment type="domain">
    <text evidence="1">Consists of three domains; the N-terminal catalytic domain, the editing domain and the C-terminal C-Ala domain. The editing domain removes incorrectly charged amino acids, while the C-Ala domain, along with tRNA(Ala), serves as a bridge to cooperatively bring together the editing and aminoacylation centers thus stimulating deacylation of misacylated tRNAs.</text>
</comment>
<comment type="similarity">
    <text evidence="1">Belongs to the class-II aminoacyl-tRNA synthetase family.</text>
</comment>
<feature type="chain" id="PRO_0000075171" description="Alanine--tRNA ligase">
    <location>
        <begin position="1"/>
        <end position="876"/>
    </location>
</feature>
<feature type="binding site" evidence="1">
    <location>
        <position position="564"/>
    </location>
    <ligand>
        <name>Zn(2+)</name>
        <dbReference type="ChEBI" id="CHEBI:29105"/>
    </ligand>
</feature>
<feature type="binding site" evidence="1">
    <location>
        <position position="568"/>
    </location>
    <ligand>
        <name>Zn(2+)</name>
        <dbReference type="ChEBI" id="CHEBI:29105"/>
    </ligand>
</feature>
<feature type="binding site" evidence="1">
    <location>
        <position position="666"/>
    </location>
    <ligand>
        <name>Zn(2+)</name>
        <dbReference type="ChEBI" id="CHEBI:29105"/>
    </ligand>
</feature>
<feature type="binding site" evidence="1">
    <location>
        <position position="670"/>
    </location>
    <ligand>
        <name>Zn(2+)</name>
        <dbReference type="ChEBI" id="CHEBI:29105"/>
    </ligand>
</feature>
<gene>
    <name evidence="1" type="primary">alaS</name>
    <name type="ordered locus">PG_1246</name>
</gene>
<organism>
    <name type="scientific">Porphyromonas gingivalis (strain ATCC BAA-308 / W83)</name>
    <dbReference type="NCBI Taxonomy" id="242619"/>
    <lineage>
        <taxon>Bacteria</taxon>
        <taxon>Pseudomonadati</taxon>
        <taxon>Bacteroidota</taxon>
        <taxon>Bacteroidia</taxon>
        <taxon>Bacteroidales</taxon>
        <taxon>Porphyromonadaceae</taxon>
        <taxon>Porphyromonas</taxon>
    </lineage>
</organism>
<evidence type="ECO:0000255" key="1">
    <source>
        <dbReference type="HAMAP-Rule" id="MF_00036"/>
    </source>
</evidence>
<accession>Q7MV54</accession>
<reference key="1">
    <citation type="journal article" date="2003" name="J. Bacteriol.">
        <title>Complete genome sequence of the oral pathogenic bacterium Porphyromonas gingivalis strain W83.</title>
        <authorList>
            <person name="Nelson K.E."/>
            <person name="Fleischmann R.D."/>
            <person name="DeBoy R.T."/>
            <person name="Paulsen I.T."/>
            <person name="Fouts D.E."/>
            <person name="Eisen J.A."/>
            <person name="Daugherty S.C."/>
            <person name="Dodson R.J."/>
            <person name="Durkin A.S."/>
            <person name="Gwinn M.L."/>
            <person name="Haft D.H."/>
            <person name="Kolonay J.F."/>
            <person name="Nelson W.C."/>
            <person name="Mason T.M."/>
            <person name="Tallon L."/>
            <person name="Gray J."/>
            <person name="Granger D."/>
            <person name="Tettelin H."/>
            <person name="Dong H."/>
            <person name="Galvin J.L."/>
            <person name="Duncan M.J."/>
            <person name="Dewhirst F.E."/>
            <person name="Fraser C.M."/>
        </authorList>
    </citation>
    <scope>NUCLEOTIDE SEQUENCE [LARGE SCALE GENOMIC DNA]</scope>
    <source>
        <strain>ATCC BAA-308 / W83</strain>
    </source>
</reference>
<keyword id="KW-0030">Aminoacyl-tRNA synthetase</keyword>
<keyword id="KW-0067">ATP-binding</keyword>
<keyword id="KW-0963">Cytoplasm</keyword>
<keyword id="KW-0436">Ligase</keyword>
<keyword id="KW-0479">Metal-binding</keyword>
<keyword id="KW-0547">Nucleotide-binding</keyword>
<keyword id="KW-0648">Protein biosynthesis</keyword>
<keyword id="KW-1185">Reference proteome</keyword>
<keyword id="KW-0694">RNA-binding</keyword>
<keyword id="KW-0820">tRNA-binding</keyword>
<keyword id="KW-0862">Zinc</keyword>
<name>SYA_PORGI</name>
<dbReference type="EC" id="6.1.1.7" evidence="1"/>
<dbReference type="EMBL" id="AE015924">
    <property type="protein sequence ID" value="AAQ66329.1"/>
    <property type="molecule type" value="Genomic_DNA"/>
</dbReference>
<dbReference type="RefSeq" id="WP_005874783.1">
    <property type="nucleotide sequence ID" value="NC_002950.2"/>
</dbReference>
<dbReference type="SMR" id="Q7MV54"/>
<dbReference type="STRING" id="242619.PG_1246"/>
<dbReference type="EnsemblBacteria" id="AAQ66329">
    <property type="protein sequence ID" value="AAQ66329"/>
    <property type="gene ID" value="PG_1246"/>
</dbReference>
<dbReference type="KEGG" id="pgi:PG_1246"/>
<dbReference type="PATRIC" id="fig|242619.8.peg.1156"/>
<dbReference type="eggNOG" id="COG0013">
    <property type="taxonomic scope" value="Bacteria"/>
</dbReference>
<dbReference type="HOGENOM" id="CLU_004485_1_1_10"/>
<dbReference type="BioCyc" id="PGIN242619:G1G02-1158-MONOMER"/>
<dbReference type="Proteomes" id="UP000000588">
    <property type="component" value="Chromosome"/>
</dbReference>
<dbReference type="GO" id="GO:0005737">
    <property type="term" value="C:cytoplasm"/>
    <property type="evidence" value="ECO:0007669"/>
    <property type="project" value="UniProtKB-SubCell"/>
</dbReference>
<dbReference type="GO" id="GO:0004813">
    <property type="term" value="F:alanine-tRNA ligase activity"/>
    <property type="evidence" value="ECO:0007669"/>
    <property type="project" value="UniProtKB-UniRule"/>
</dbReference>
<dbReference type="GO" id="GO:0002161">
    <property type="term" value="F:aminoacyl-tRNA deacylase activity"/>
    <property type="evidence" value="ECO:0007669"/>
    <property type="project" value="TreeGrafter"/>
</dbReference>
<dbReference type="GO" id="GO:0005524">
    <property type="term" value="F:ATP binding"/>
    <property type="evidence" value="ECO:0007669"/>
    <property type="project" value="UniProtKB-UniRule"/>
</dbReference>
<dbReference type="GO" id="GO:0000049">
    <property type="term" value="F:tRNA binding"/>
    <property type="evidence" value="ECO:0007669"/>
    <property type="project" value="UniProtKB-KW"/>
</dbReference>
<dbReference type="GO" id="GO:0008270">
    <property type="term" value="F:zinc ion binding"/>
    <property type="evidence" value="ECO:0007669"/>
    <property type="project" value="UniProtKB-UniRule"/>
</dbReference>
<dbReference type="GO" id="GO:0006419">
    <property type="term" value="P:alanyl-tRNA aminoacylation"/>
    <property type="evidence" value="ECO:0007669"/>
    <property type="project" value="UniProtKB-UniRule"/>
</dbReference>
<dbReference type="CDD" id="cd00673">
    <property type="entry name" value="AlaRS_core"/>
    <property type="match status" value="1"/>
</dbReference>
<dbReference type="FunFam" id="3.10.310.40:FF:000001">
    <property type="entry name" value="Alanine--tRNA ligase"/>
    <property type="match status" value="1"/>
</dbReference>
<dbReference type="FunFam" id="3.30.54.20:FF:000001">
    <property type="entry name" value="Alanine--tRNA ligase"/>
    <property type="match status" value="1"/>
</dbReference>
<dbReference type="FunFam" id="3.30.930.10:FF:000011">
    <property type="entry name" value="Alanine--tRNA ligase, cytoplasmic"/>
    <property type="match status" value="1"/>
</dbReference>
<dbReference type="FunFam" id="3.30.980.10:FF:000004">
    <property type="entry name" value="Alanine--tRNA ligase, cytoplasmic"/>
    <property type="match status" value="1"/>
</dbReference>
<dbReference type="Gene3D" id="2.40.30.130">
    <property type="match status" value="1"/>
</dbReference>
<dbReference type="Gene3D" id="3.10.310.40">
    <property type="match status" value="1"/>
</dbReference>
<dbReference type="Gene3D" id="3.30.54.20">
    <property type="match status" value="1"/>
</dbReference>
<dbReference type="Gene3D" id="3.30.930.10">
    <property type="entry name" value="Bira Bifunctional Protein, Domain 2"/>
    <property type="match status" value="1"/>
</dbReference>
<dbReference type="Gene3D" id="3.30.980.10">
    <property type="entry name" value="Threonyl-trna Synthetase, Chain A, domain 2"/>
    <property type="match status" value="1"/>
</dbReference>
<dbReference type="HAMAP" id="MF_00036_B">
    <property type="entry name" value="Ala_tRNA_synth_B"/>
    <property type="match status" value="1"/>
</dbReference>
<dbReference type="InterPro" id="IPR045864">
    <property type="entry name" value="aa-tRNA-synth_II/BPL/LPL"/>
</dbReference>
<dbReference type="InterPro" id="IPR002318">
    <property type="entry name" value="Ala-tRNA-lgiase_IIc"/>
</dbReference>
<dbReference type="InterPro" id="IPR018162">
    <property type="entry name" value="Ala-tRNA-ligase_IIc_anticod-bd"/>
</dbReference>
<dbReference type="InterPro" id="IPR018165">
    <property type="entry name" value="Ala-tRNA-synth_IIc_core"/>
</dbReference>
<dbReference type="InterPro" id="IPR018164">
    <property type="entry name" value="Ala-tRNA-synth_IIc_N"/>
</dbReference>
<dbReference type="InterPro" id="IPR050058">
    <property type="entry name" value="Ala-tRNA_ligase"/>
</dbReference>
<dbReference type="InterPro" id="IPR023033">
    <property type="entry name" value="Ala_tRNA_ligase_euk/bac"/>
</dbReference>
<dbReference type="InterPro" id="IPR003156">
    <property type="entry name" value="DHHA1_dom"/>
</dbReference>
<dbReference type="InterPro" id="IPR018163">
    <property type="entry name" value="Thr/Ala-tRNA-synth_IIc_edit"/>
</dbReference>
<dbReference type="InterPro" id="IPR009000">
    <property type="entry name" value="Transl_B-barrel_sf"/>
</dbReference>
<dbReference type="InterPro" id="IPR012947">
    <property type="entry name" value="tRNA_SAD"/>
</dbReference>
<dbReference type="NCBIfam" id="TIGR00344">
    <property type="entry name" value="alaS"/>
    <property type="match status" value="1"/>
</dbReference>
<dbReference type="PANTHER" id="PTHR11777:SF9">
    <property type="entry name" value="ALANINE--TRNA LIGASE, CYTOPLASMIC"/>
    <property type="match status" value="1"/>
</dbReference>
<dbReference type="PANTHER" id="PTHR11777">
    <property type="entry name" value="ALANYL-TRNA SYNTHETASE"/>
    <property type="match status" value="1"/>
</dbReference>
<dbReference type="Pfam" id="PF02272">
    <property type="entry name" value="DHHA1"/>
    <property type="match status" value="1"/>
</dbReference>
<dbReference type="Pfam" id="PF01411">
    <property type="entry name" value="tRNA-synt_2c"/>
    <property type="match status" value="1"/>
</dbReference>
<dbReference type="Pfam" id="PF07973">
    <property type="entry name" value="tRNA_SAD"/>
    <property type="match status" value="1"/>
</dbReference>
<dbReference type="PRINTS" id="PR00980">
    <property type="entry name" value="TRNASYNTHALA"/>
</dbReference>
<dbReference type="SMART" id="SM00863">
    <property type="entry name" value="tRNA_SAD"/>
    <property type="match status" value="1"/>
</dbReference>
<dbReference type="SUPFAM" id="SSF55681">
    <property type="entry name" value="Class II aaRS and biotin synthetases"/>
    <property type="match status" value="1"/>
</dbReference>
<dbReference type="SUPFAM" id="SSF101353">
    <property type="entry name" value="Putative anticodon-binding domain of alanyl-tRNA synthetase (AlaRS)"/>
    <property type="match status" value="1"/>
</dbReference>
<dbReference type="SUPFAM" id="SSF55186">
    <property type="entry name" value="ThrRS/AlaRS common domain"/>
    <property type="match status" value="1"/>
</dbReference>
<dbReference type="SUPFAM" id="SSF50447">
    <property type="entry name" value="Translation proteins"/>
    <property type="match status" value="1"/>
</dbReference>
<dbReference type="PROSITE" id="PS50860">
    <property type="entry name" value="AA_TRNA_LIGASE_II_ALA"/>
    <property type="match status" value="1"/>
</dbReference>
<proteinExistence type="inferred from homology"/>